<reference key="1">
    <citation type="submission" date="2007-04" db="EMBL/GenBank/DDBJ databases">
        <title>Complete sequence of Pseudomonas mendocina ymp.</title>
        <authorList>
            <consortium name="US DOE Joint Genome Institute"/>
            <person name="Copeland A."/>
            <person name="Lucas S."/>
            <person name="Lapidus A."/>
            <person name="Barry K."/>
            <person name="Glavina del Rio T."/>
            <person name="Dalin E."/>
            <person name="Tice H."/>
            <person name="Pitluck S."/>
            <person name="Kiss H."/>
            <person name="Brettin T."/>
            <person name="Detter J.C."/>
            <person name="Bruce D."/>
            <person name="Han C."/>
            <person name="Schmutz J."/>
            <person name="Larimer F."/>
            <person name="Land M."/>
            <person name="Hauser L."/>
            <person name="Kyrpides N."/>
            <person name="Mikhailova N."/>
            <person name="Hersman L."/>
            <person name="Dubois J."/>
            <person name="Maurice P."/>
            <person name="Richardson P."/>
        </authorList>
    </citation>
    <scope>NUCLEOTIDE SEQUENCE [LARGE SCALE GENOMIC DNA]</scope>
    <source>
        <strain>ymp</strain>
    </source>
</reference>
<organism>
    <name type="scientific">Ectopseudomonas mendocina (strain ymp)</name>
    <name type="common">Pseudomonas mendocina</name>
    <dbReference type="NCBI Taxonomy" id="399739"/>
    <lineage>
        <taxon>Bacteria</taxon>
        <taxon>Pseudomonadati</taxon>
        <taxon>Pseudomonadota</taxon>
        <taxon>Gammaproteobacteria</taxon>
        <taxon>Pseudomonadales</taxon>
        <taxon>Pseudomonadaceae</taxon>
        <taxon>Ectopseudomonas</taxon>
    </lineage>
</organism>
<keyword id="KW-0133">Cell shape</keyword>
<keyword id="KW-0961">Cell wall biogenesis/degradation</keyword>
<keyword id="KW-0413">Isomerase</keyword>
<keyword id="KW-0573">Peptidoglycan synthesis</keyword>
<evidence type="ECO:0000255" key="1">
    <source>
        <dbReference type="HAMAP-Rule" id="MF_00258"/>
    </source>
</evidence>
<accession>A4XR64</accession>
<protein>
    <recommendedName>
        <fullName evidence="1">Glutamate racemase</fullName>
        <ecNumber evidence="1">5.1.1.3</ecNumber>
    </recommendedName>
</protein>
<proteinExistence type="inferred from homology"/>
<comment type="function">
    <text evidence="1">Provides the (R)-glutamate required for cell wall biosynthesis.</text>
</comment>
<comment type="catalytic activity">
    <reaction evidence="1">
        <text>L-glutamate = D-glutamate</text>
        <dbReference type="Rhea" id="RHEA:12813"/>
        <dbReference type="ChEBI" id="CHEBI:29985"/>
        <dbReference type="ChEBI" id="CHEBI:29986"/>
        <dbReference type="EC" id="5.1.1.3"/>
    </reaction>
</comment>
<comment type="pathway">
    <text evidence="1">Cell wall biogenesis; peptidoglycan biosynthesis.</text>
</comment>
<comment type="similarity">
    <text evidence="1">Belongs to the aspartate/glutamate racemases family.</text>
</comment>
<dbReference type="EC" id="5.1.1.3" evidence="1"/>
<dbReference type="EMBL" id="CP000680">
    <property type="protein sequence ID" value="ABP83830.1"/>
    <property type="molecule type" value="Genomic_DNA"/>
</dbReference>
<dbReference type="SMR" id="A4XR64"/>
<dbReference type="STRING" id="399739.Pmen_1063"/>
<dbReference type="KEGG" id="pmy:Pmen_1063"/>
<dbReference type="PATRIC" id="fig|399739.8.peg.1073"/>
<dbReference type="eggNOG" id="COG0796">
    <property type="taxonomic scope" value="Bacteria"/>
</dbReference>
<dbReference type="HOGENOM" id="CLU_052344_1_0_6"/>
<dbReference type="OrthoDB" id="9801055at2"/>
<dbReference type="UniPathway" id="UPA00219"/>
<dbReference type="GO" id="GO:0008881">
    <property type="term" value="F:glutamate racemase activity"/>
    <property type="evidence" value="ECO:0007669"/>
    <property type="project" value="UniProtKB-UniRule"/>
</dbReference>
<dbReference type="GO" id="GO:0071555">
    <property type="term" value="P:cell wall organization"/>
    <property type="evidence" value="ECO:0007669"/>
    <property type="project" value="UniProtKB-KW"/>
</dbReference>
<dbReference type="GO" id="GO:0009252">
    <property type="term" value="P:peptidoglycan biosynthetic process"/>
    <property type="evidence" value="ECO:0007669"/>
    <property type="project" value="UniProtKB-UniRule"/>
</dbReference>
<dbReference type="GO" id="GO:0008360">
    <property type="term" value="P:regulation of cell shape"/>
    <property type="evidence" value="ECO:0007669"/>
    <property type="project" value="UniProtKB-KW"/>
</dbReference>
<dbReference type="FunFam" id="3.40.50.1860:FF:000002">
    <property type="entry name" value="Glutamate racemase"/>
    <property type="match status" value="1"/>
</dbReference>
<dbReference type="Gene3D" id="3.40.50.1860">
    <property type="match status" value="2"/>
</dbReference>
<dbReference type="HAMAP" id="MF_00258">
    <property type="entry name" value="Glu_racemase"/>
    <property type="match status" value="1"/>
</dbReference>
<dbReference type="InterPro" id="IPR015942">
    <property type="entry name" value="Asp/Glu/hydantoin_racemase"/>
</dbReference>
<dbReference type="InterPro" id="IPR001920">
    <property type="entry name" value="Asp/Glu_race"/>
</dbReference>
<dbReference type="InterPro" id="IPR018187">
    <property type="entry name" value="Asp/Glu_racemase_AS_1"/>
</dbReference>
<dbReference type="InterPro" id="IPR033134">
    <property type="entry name" value="Asp/Glu_racemase_AS_2"/>
</dbReference>
<dbReference type="InterPro" id="IPR004391">
    <property type="entry name" value="Glu_race"/>
</dbReference>
<dbReference type="NCBIfam" id="TIGR00067">
    <property type="entry name" value="glut_race"/>
    <property type="match status" value="1"/>
</dbReference>
<dbReference type="PANTHER" id="PTHR21198">
    <property type="entry name" value="GLUTAMATE RACEMASE"/>
    <property type="match status" value="1"/>
</dbReference>
<dbReference type="PANTHER" id="PTHR21198:SF2">
    <property type="entry name" value="GLUTAMATE RACEMASE"/>
    <property type="match status" value="1"/>
</dbReference>
<dbReference type="Pfam" id="PF01177">
    <property type="entry name" value="Asp_Glu_race"/>
    <property type="match status" value="1"/>
</dbReference>
<dbReference type="SUPFAM" id="SSF53681">
    <property type="entry name" value="Aspartate/glutamate racemase"/>
    <property type="match status" value="2"/>
</dbReference>
<dbReference type="PROSITE" id="PS00923">
    <property type="entry name" value="ASP_GLU_RACEMASE_1"/>
    <property type="match status" value="1"/>
</dbReference>
<dbReference type="PROSITE" id="PS00924">
    <property type="entry name" value="ASP_GLU_RACEMASE_2"/>
    <property type="match status" value="1"/>
</dbReference>
<feature type="chain" id="PRO_1000059073" description="Glutamate racemase">
    <location>
        <begin position="1"/>
        <end position="263"/>
    </location>
</feature>
<feature type="active site" description="Proton donor/acceptor" evidence="1">
    <location>
        <position position="75"/>
    </location>
</feature>
<feature type="active site" description="Proton donor/acceptor" evidence="1">
    <location>
        <position position="186"/>
    </location>
</feature>
<feature type="binding site" evidence="1">
    <location>
        <begin position="12"/>
        <end position="13"/>
    </location>
    <ligand>
        <name>substrate</name>
    </ligand>
</feature>
<feature type="binding site" evidence="1">
    <location>
        <begin position="44"/>
        <end position="45"/>
    </location>
    <ligand>
        <name>substrate</name>
    </ligand>
</feature>
<feature type="binding site" evidence="1">
    <location>
        <begin position="76"/>
        <end position="77"/>
    </location>
    <ligand>
        <name>substrate</name>
    </ligand>
</feature>
<feature type="binding site" evidence="1">
    <location>
        <begin position="187"/>
        <end position="188"/>
    </location>
    <ligand>
        <name>substrate</name>
    </ligand>
</feature>
<sequence length="263" mass="27980">MNQSQAPVGVFDSGVGGLSVLREIRQLLPNESLLYVADSGHVPYGEKSAEYIRERCVLITEHLLAQGAKALVLACNTATAAAAAELRERYPQLPIVGMEPAVKPAAAATRSGVVGVLATTGTLKSAKFAALLDRFASDVRVITQPCPGLVECIEAGALQAPATRELLQGYVEPLLAEGCDTLILGCTHYPFLKPLLHSLVPDSVSLIDTGAAVARQLQRLLGQHELLATQPAQATRYWSSGDIQRMQAVLPLLLGEQAQVHVF</sequence>
<name>MURI_ECTM1</name>
<gene>
    <name evidence="1" type="primary">murI</name>
    <name type="ordered locus">Pmen_1063</name>
</gene>